<evidence type="ECO:0000250" key="1">
    <source>
        <dbReference type="UniProtKB" id="P11544"/>
    </source>
</evidence>
<evidence type="ECO:0000250" key="2">
    <source>
        <dbReference type="UniProtKB" id="P24481"/>
    </source>
</evidence>
<evidence type="ECO:0000250" key="3">
    <source>
        <dbReference type="UniProtKB" id="Q68G84"/>
    </source>
</evidence>
<evidence type="ECO:0000255" key="4">
    <source>
        <dbReference type="PROSITE-ProRule" id="PRU10122"/>
    </source>
</evidence>
<evidence type="ECO:0000305" key="5"/>
<gene>
    <name type="primary">ZB8</name>
    <name type="ordered locus">Os02g0627100</name>
    <name type="ordered locus">LOC_Os02g41680</name>
    <name type="ORF">OsJ_007359</name>
    <name type="ORF">P0042D01.10</name>
</gene>
<proteinExistence type="evidence at transcript level"/>
<organism>
    <name type="scientific">Oryza sativa subsp. japonica</name>
    <name type="common">Rice</name>
    <dbReference type="NCBI Taxonomy" id="39947"/>
    <lineage>
        <taxon>Eukaryota</taxon>
        <taxon>Viridiplantae</taxon>
        <taxon>Streptophyta</taxon>
        <taxon>Embryophyta</taxon>
        <taxon>Tracheophyta</taxon>
        <taxon>Spermatophyta</taxon>
        <taxon>Magnoliopsida</taxon>
        <taxon>Liliopsida</taxon>
        <taxon>Poales</taxon>
        <taxon>Poaceae</taxon>
        <taxon>BOP clade</taxon>
        <taxon>Oryzoideae</taxon>
        <taxon>Oryzeae</taxon>
        <taxon>Oryzinae</taxon>
        <taxon>Oryza</taxon>
        <taxon>Oryza sativa</taxon>
    </lineage>
</organism>
<name>PAL2_ORYSJ</name>
<reference key="1">
    <citation type="journal article" date="2005" name="Nature">
        <title>The map-based sequence of the rice genome.</title>
        <authorList>
            <consortium name="International rice genome sequencing project (IRGSP)"/>
        </authorList>
    </citation>
    <scope>NUCLEOTIDE SEQUENCE [LARGE SCALE GENOMIC DNA]</scope>
    <source>
        <strain>cv. Nipponbare</strain>
    </source>
</reference>
<reference key="2">
    <citation type="journal article" date="2008" name="Nucleic Acids Res.">
        <title>The rice annotation project database (RAP-DB): 2008 update.</title>
        <authorList>
            <consortium name="The rice annotation project (RAP)"/>
        </authorList>
    </citation>
    <scope>GENOME REANNOTATION</scope>
    <source>
        <strain>cv. Nipponbare</strain>
    </source>
</reference>
<reference key="3">
    <citation type="journal article" date="2013" name="Rice">
        <title>Improvement of the Oryza sativa Nipponbare reference genome using next generation sequence and optical map data.</title>
        <authorList>
            <person name="Kawahara Y."/>
            <person name="de la Bastide M."/>
            <person name="Hamilton J.P."/>
            <person name="Kanamori H."/>
            <person name="McCombie W.R."/>
            <person name="Ouyang S."/>
            <person name="Schwartz D.C."/>
            <person name="Tanaka T."/>
            <person name="Wu J."/>
            <person name="Zhou S."/>
            <person name="Childs K.L."/>
            <person name="Davidson R.M."/>
            <person name="Lin H."/>
            <person name="Quesada-Ocampo L."/>
            <person name="Vaillancourt B."/>
            <person name="Sakai H."/>
            <person name="Lee S.S."/>
            <person name="Kim J."/>
            <person name="Numa H."/>
            <person name="Itoh T."/>
            <person name="Buell C.R."/>
            <person name="Matsumoto T."/>
        </authorList>
    </citation>
    <scope>GENOME REANNOTATION</scope>
    <source>
        <strain>cv. Nipponbare</strain>
    </source>
</reference>
<reference key="4">
    <citation type="journal article" date="2005" name="PLoS Biol.">
        <title>The genomes of Oryza sativa: a history of duplications.</title>
        <authorList>
            <person name="Yu J."/>
            <person name="Wang J."/>
            <person name="Lin W."/>
            <person name="Li S."/>
            <person name="Li H."/>
            <person name="Zhou J."/>
            <person name="Ni P."/>
            <person name="Dong W."/>
            <person name="Hu S."/>
            <person name="Zeng C."/>
            <person name="Zhang J."/>
            <person name="Zhang Y."/>
            <person name="Li R."/>
            <person name="Xu Z."/>
            <person name="Li S."/>
            <person name="Li X."/>
            <person name="Zheng H."/>
            <person name="Cong L."/>
            <person name="Lin L."/>
            <person name="Yin J."/>
            <person name="Geng J."/>
            <person name="Li G."/>
            <person name="Shi J."/>
            <person name="Liu J."/>
            <person name="Lv H."/>
            <person name="Li J."/>
            <person name="Wang J."/>
            <person name="Deng Y."/>
            <person name="Ran L."/>
            <person name="Shi X."/>
            <person name="Wang X."/>
            <person name="Wu Q."/>
            <person name="Li C."/>
            <person name="Ren X."/>
            <person name="Wang J."/>
            <person name="Wang X."/>
            <person name="Li D."/>
            <person name="Liu D."/>
            <person name="Zhang X."/>
            <person name="Ji Z."/>
            <person name="Zhao W."/>
            <person name="Sun Y."/>
            <person name="Zhang Z."/>
            <person name="Bao J."/>
            <person name="Han Y."/>
            <person name="Dong L."/>
            <person name="Ji J."/>
            <person name="Chen P."/>
            <person name="Wu S."/>
            <person name="Liu J."/>
            <person name="Xiao Y."/>
            <person name="Bu D."/>
            <person name="Tan J."/>
            <person name="Yang L."/>
            <person name="Ye C."/>
            <person name="Zhang J."/>
            <person name="Xu J."/>
            <person name="Zhou Y."/>
            <person name="Yu Y."/>
            <person name="Zhang B."/>
            <person name="Zhuang S."/>
            <person name="Wei H."/>
            <person name="Liu B."/>
            <person name="Lei M."/>
            <person name="Yu H."/>
            <person name="Li Y."/>
            <person name="Xu H."/>
            <person name="Wei S."/>
            <person name="He X."/>
            <person name="Fang L."/>
            <person name="Zhang Z."/>
            <person name="Zhang Y."/>
            <person name="Huang X."/>
            <person name="Su Z."/>
            <person name="Tong W."/>
            <person name="Li J."/>
            <person name="Tong Z."/>
            <person name="Li S."/>
            <person name="Ye J."/>
            <person name="Wang L."/>
            <person name="Fang L."/>
            <person name="Lei T."/>
            <person name="Chen C.-S."/>
            <person name="Chen H.-C."/>
            <person name="Xu Z."/>
            <person name="Li H."/>
            <person name="Huang H."/>
            <person name="Zhang F."/>
            <person name="Xu H."/>
            <person name="Li N."/>
            <person name="Zhao C."/>
            <person name="Li S."/>
            <person name="Dong L."/>
            <person name="Huang Y."/>
            <person name="Li L."/>
            <person name="Xi Y."/>
            <person name="Qi Q."/>
            <person name="Li W."/>
            <person name="Zhang B."/>
            <person name="Hu W."/>
            <person name="Zhang Y."/>
            <person name="Tian X."/>
            <person name="Jiao Y."/>
            <person name="Liang X."/>
            <person name="Jin J."/>
            <person name="Gao L."/>
            <person name="Zheng W."/>
            <person name="Hao B."/>
            <person name="Liu S.-M."/>
            <person name="Wang W."/>
            <person name="Yuan L."/>
            <person name="Cao M."/>
            <person name="McDermott J."/>
            <person name="Samudrala R."/>
            <person name="Wang J."/>
            <person name="Wong G.K.-S."/>
            <person name="Yang H."/>
        </authorList>
    </citation>
    <scope>NUCLEOTIDE SEQUENCE [LARGE SCALE GENOMIC DNA]</scope>
    <source>
        <strain>cv. Nipponbare</strain>
    </source>
</reference>
<reference key="5">
    <citation type="journal article" date="2003" name="Science">
        <title>Collection, mapping, and annotation of over 28,000 cDNA clones from japonica rice.</title>
        <authorList>
            <consortium name="The rice full-length cDNA consortium"/>
        </authorList>
    </citation>
    <scope>NUCLEOTIDE SEQUENCE [LARGE SCALE MRNA]</scope>
    <source>
        <strain>cv. Nipponbare</strain>
    </source>
</reference>
<accession>Q0DZE0</accession>
<accession>P53443</accession>
<accession>Q6K6P7</accession>
<dbReference type="EC" id="4.3.1.24" evidence="2"/>
<dbReference type="EMBL" id="AP005000">
    <property type="protein sequence ID" value="BAD23155.1"/>
    <property type="molecule type" value="Genomic_DNA"/>
</dbReference>
<dbReference type="EMBL" id="AP008208">
    <property type="protein sequence ID" value="BAF09398.1"/>
    <property type="molecule type" value="Genomic_DNA"/>
</dbReference>
<dbReference type="EMBL" id="AP014958">
    <property type="protein sequence ID" value="BAS79869.1"/>
    <property type="molecule type" value="Genomic_DNA"/>
</dbReference>
<dbReference type="EMBL" id="CM000139">
    <property type="protein sequence ID" value="EAZ23876.1"/>
    <property type="molecule type" value="Genomic_DNA"/>
</dbReference>
<dbReference type="EMBL" id="AK068993">
    <property type="status" value="NOT_ANNOTATED_CDS"/>
    <property type="molecule type" value="mRNA"/>
</dbReference>
<dbReference type="RefSeq" id="XP_015626729.1">
    <property type="nucleotide sequence ID" value="XM_015771243.1"/>
</dbReference>
<dbReference type="SMR" id="Q0DZE0"/>
<dbReference type="FunCoup" id="Q0DZE0">
    <property type="interactions" value="478"/>
</dbReference>
<dbReference type="STRING" id="39947.Q0DZE0"/>
<dbReference type="PaxDb" id="39947-Q0DZE0"/>
<dbReference type="EnsemblPlants" id="Os02t0627100-01">
    <property type="protein sequence ID" value="Os02t0627100-01"/>
    <property type="gene ID" value="Os02g0627100"/>
</dbReference>
<dbReference type="Gramene" id="Os02t0627100-01">
    <property type="protein sequence ID" value="Os02t0627100-01"/>
    <property type="gene ID" value="Os02g0627100"/>
</dbReference>
<dbReference type="KEGG" id="dosa:Os02g0627100"/>
<dbReference type="eggNOG" id="KOG0222">
    <property type="taxonomic scope" value="Eukaryota"/>
</dbReference>
<dbReference type="HOGENOM" id="CLU_014801_3_0_1"/>
<dbReference type="InParanoid" id="Q0DZE0"/>
<dbReference type="OMA" id="VENTRCE"/>
<dbReference type="OrthoDB" id="607499at2759"/>
<dbReference type="PlantReactome" id="R-OSA-1119261">
    <property type="pathway name" value="Salicylate biosynthesis"/>
</dbReference>
<dbReference type="PlantReactome" id="R-OSA-1119418">
    <property type="pathway name" value="Suberin biosynthesis"/>
</dbReference>
<dbReference type="PlantReactome" id="R-OSA-1119582">
    <property type="pathway name" value="Phenylpropanoid biosynthesis, initial reactions"/>
</dbReference>
<dbReference type="UniPathway" id="UPA00713">
    <property type="reaction ID" value="UER00725"/>
</dbReference>
<dbReference type="Proteomes" id="UP000000763">
    <property type="component" value="Chromosome 2"/>
</dbReference>
<dbReference type="Proteomes" id="UP000007752">
    <property type="component" value="Chromosome 2"/>
</dbReference>
<dbReference type="Proteomes" id="UP000059680">
    <property type="component" value="Chromosome 2"/>
</dbReference>
<dbReference type="ExpressionAtlas" id="Q0DZE0">
    <property type="expression patterns" value="baseline and differential"/>
</dbReference>
<dbReference type="GO" id="GO:0005737">
    <property type="term" value="C:cytoplasm"/>
    <property type="evidence" value="ECO:0007669"/>
    <property type="project" value="UniProtKB-SubCell"/>
</dbReference>
<dbReference type="GO" id="GO:0016841">
    <property type="term" value="F:ammonia-lyase activity"/>
    <property type="evidence" value="ECO:0000318"/>
    <property type="project" value="GO_Central"/>
</dbReference>
<dbReference type="GO" id="GO:0045548">
    <property type="term" value="F:phenylalanine ammonia-lyase activity"/>
    <property type="evidence" value="ECO:0007669"/>
    <property type="project" value="UniProtKB-EC"/>
</dbReference>
<dbReference type="GO" id="GO:0009800">
    <property type="term" value="P:cinnamic acid biosynthetic process"/>
    <property type="evidence" value="ECO:0007669"/>
    <property type="project" value="UniProtKB-UniPathway"/>
</dbReference>
<dbReference type="GO" id="GO:0006559">
    <property type="term" value="P:L-phenylalanine catabolic process"/>
    <property type="evidence" value="ECO:0007669"/>
    <property type="project" value="UniProtKB-KW"/>
</dbReference>
<dbReference type="CDD" id="cd00332">
    <property type="entry name" value="PAL-HAL"/>
    <property type="match status" value="1"/>
</dbReference>
<dbReference type="FunFam" id="1.10.274.20:FF:000001">
    <property type="entry name" value="Phenylalanine ammonia-lyase"/>
    <property type="match status" value="1"/>
</dbReference>
<dbReference type="FunFam" id="1.10.275.10:FF:000009">
    <property type="entry name" value="Phenylalanine ammonia-lyase"/>
    <property type="match status" value="1"/>
</dbReference>
<dbReference type="FunFam" id="1.20.200.10:FF:000009">
    <property type="entry name" value="Phenylalanine ammonia-lyase"/>
    <property type="match status" value="1"/>
</dbReference>
<dbReference type="Gene3D" id="1.20.200.10">
    <property type="entry name" value="Fumarase/aspartase (Central domain)"/>
    <property type="match status" value="1"/>
</dbReference>
<dbReference type="Gene3D" id="1.10.275.10">
    <property type="entry name" value="Fumarase/aspartase (N-terminal domain)"/>
    <property type="match status" value="1"/>
</dbReference>
<dbReference type="Gene3D" id="1.10.274.20">
    <property type="entry name" value="Phenylalanine ammonia-lyase 1, domain 3"/>
    <property type="match status" value="1"/>
</dbReference>
<dbReference type="InterPro" id="IPR001106">
    <property type="entry name" value="Aromatic_Lyase"/>
</dbReference>
<dbReference type="InterPro" id="IPR024083">
    <property type="entry name" value="Fumarase/histidase_N"/>
</dbReference>
<dbReference type="InterPro" id="IPR008948">
    <property type="entry name" value="L-Aspartase-like"/>
</dbReference>
<dbReference type="InterPro" id="IPR022313">
    <property type="entry name" value="Phe/His_NH3-lyase_AS"/>
</dbReference>
<dbReference type="InterPro" id="IPR005922">
    <property type="entry name" value="Phe_NH3-lyase"/>
</dbReference>
<dbReference type="InterPro" id="IPR023144">
    <property type="entry name" value="Phe_NH3-lyase_shielding_dom_sf"/>
</dbReference>
<dbReference type="NCBIfam" id="TIGR01226">
    <property type="entry name" value="phe_am_lyase"/>
    <property type="match status" value="1"/>
</dbReference>
<dbReference type="PANTHER" id="PTHR10362">
    <property type="entry name" value="HISTIDINE AMMONIA-LYASE"/>
    <property type="match status" value="1"/>
</dbReference>
<dbReference type="Pfam" id="PF00221">
    <property type="entry name" value="Lyase_aromatic"/>
    <property type="match status" value="1"/>
</dbReference>
<dbReference type="SUPFAM" id="SSF48557">
    <property type="entry name" value="L-aspartase-like"/>
    <property type="match status" value="1"/>
</dbReference>
<dbReference type="PROSITE" id="PS00488">
    <property type="entry name" value="PAL_HISTIDASE"/>
    <property type="match status" value="1"/>
</dbReference>
<sequence>MECENGRVSANGMSGLCVAAPRADPLNWGKATEEMTGSHLDEVKRMVAEYRQPLVKIEGASLRIAQVAAVAAAGEARVELDESARERVKASSDWVMNSMMNGTDSYGVTTGFGATSHRRTKEGGALQRELIRFLNAGAFGTGTDGHVLPAEATRAAMLVRINTLLQGYSGIRFEILEAIAKLLNANVTPCLPLRGTITASGDLVPLSYIAGLVTGRENAVAVAPDGSKVNAAEAFKIAGIQGGFFELQPKEGLAMVNGTAVGSGLASTVLFEANILAILAEVLSAVFCEVMNGKPEYTDHLTHKLKHHPGQIEAAAIMEHILEGSSYMKHAKKLGELDPLMKPKQDRYALRTSPQWLGPQIEVIRAATKSIEREINSVNDNPLIDVSRGKALHGGNFQGTPIGVSMDNTRLAIAAIGKLMFAQFSELVNDFYNNGLPSNLSGGRNPSLDYGFKGAEIAMASYCSELQFLGNPVTNHVQSAEQHNQDVNSLGLISSRKTDEAIDILKLMSSTFLIALCQAVDLRHIEENVKSAVKSCVMTVAKKTLSTNSTGDLHVARFCEKDLLKEIDREAVFAYADDPCSHNYPLMKKLRNVLVERALANGAAEFNADTSVFAKVAQFEEELRATLPGAIEAARAAVENGTAAIPSRITECRSYPLYRFVREELGTKYLTGEKTRSPGEELNKVLVAINEGKHIDPLLECLKEWNGEPLPIC</sequence>
<keyword id="KW-0963">Cytoplasm</keyword>
<keyword id="KW-0456">Lyase</keyword>
<keyword id="KW-0585">Phenylalanine catabolism</keyword>
<keyword id="KW-0587">Phenylpropanoid metabolism</keyword>
<keyword id="KW-1185">Reference proteome</keyword>
<feature type="chain" id="PRO_0000215402" description="Phenylalanine ammonia-lyase">
    <location>
        <begin position="1"/>
        <end position="713"/>
    </location>
</feature>
<feature type="active site" description="Proton donor/acceptor" evidence="3">
    <location>
        <position position="106"/>
    </location>
</feature>
<feature type="binding site" evidence="3">
    <location>
        <position position="257"/>
    </location>
    <ligand>
        <name>(E)-cinnamate</name>
        <dbReference type="ChEBI" id="CHEBI:15669"/>
    </ligand>
</feature>
<feature type="binding site" evidence="3">
    <location>
        <position position="345"/>
    </location>
    <ligand>
        <name>(E)-cinnamate</name>
        <dbReference type="ChEBI" id="CHEBI:15669"/>
    </ligand>
</feature>
<feature type="binding site" evidence="3">
    <location>
        <position position="351"/>
    </location>
    <ligand>
        <name>(E)-cinnamate</name>
        <dbReference type="ChEBI" id="CHEBI:15669"/>
    </ligand>
</feature>
<feature type="binding site" evidence="3">
    <location>
        <position position="381"/>
    </location>
    <ligand>
        <name>(E)-cinnamate</name>
        <dbReference type="ChEBI" id="CHEBI:15669"/>
    </ligand>
</feature>
<feature type="binding site" evidence="1">
    <location>
        <position position="453"/>
    </location>
    <ligand>
        <name>(E)-cinnamate</name>
        <dbReference type="ChEBI" id="CHEBI:15669"/>
    </ligand>
</feature>
<feature type="binding site" evidence="1">
    <location>
        <position position="481"/>
    </location>
    <ligand>
        <name>(E)-cinnamate</name>
        <dbReference type="ChEBI" id="CHEBI:15669"/>
    </ligand>
</feature>
<feature type="binding site" evidence="3">
    <location>
        <position position="484"/>
    </location>
    <ligand>
        <name>(E)-cinnamate</name>
        <dbReference type="ChEBI" id="CHEBI:15669"/>
    </ligand>
</feature>
<feature type="modified residue" description="2,3-didehydroalanine (Ser)" evidence="4">
    <location>
        <position position="200"/>
    </location>
</feature>
<feature type="cross-link" description="5-imidazolinone (Ala-Gly)" evidence="3">
    <location>
        <begin position="199"/>
        <end position="201"/>
    </location>
</feature>
<comment type="function">
    <text evidence="2">This is a key enzyme of plant metabolism catalyzing the first reaction in the biosynthesis from L-phenylalanine of a wide variety of natural products based on the phenylpropane skeleton.</text>
</comment>
<comment type="catalytic activity">
    <reaction evidence="2">
        <text>L-phenylalanine = (E)-cinnamate + NH4(+)</text>
        <dbReference type="Rhea" id="RHEA:21384"/>
        <dbReference type="ChEBI" id="CHEBI:15669"/>
        <dbReference type="ChEBI" id="CHEBI:28938"/>
        <dbReference type="ChEBI" id="CHEBI:58095"/>
        <dbReference type="EC" id="4.3.1.24"/>
    </reaction>
</comment>
<comment type="pathway">
    <text evidence="5">Phenylpropanoid metabolism; trans-cinnamate biosynthesis; trans-cinnamate from L-phenylalanine: step 1/1.</text>
</comment>
<comment type="subunit">
    <text evidence="2">Homotetramer.</text>
</comment>
<comment type="subcellular location">
    <subcellularLocation>
        <location evidence="5">Cytoplasm</location>
    </subcellularLocation>
</comment>
<comment type="PTM">
    <text evidence="3">Contains an active site 4-methylidene-imidazol-5-one (MIO), which is formed autocatalytically by cyclization and dehydration of residues Ala-Ser-Gly.</text>
</comment>
<comment type="similarity">
    <text evidence="5">Belongs to the PAL/histidase family.</text>
</comment>
<protein>
    <recommendedName>
        <fullName>Phenylalanine ammonia-lyase</fullName>
        <ecNumber evidence="2">4.3.1.24</ecNumber>
    </recommendedName>
</protein>